<sequence>MTDVPVSRLRNFCIIAHIDHGKSTLADRLLQDTGTVAGRDMQEQFLDNMDLERERGITIKLQAARMNYTAADGESYVLNLIDTPGHVDFSYEVSRSLQACEGALLVVDASQGVEAQTLANVYLALENDLEIIPVLNKIDLPGSDPERIKEEIEAIIGLDTSTAIACSAKTGLGVPEIMQAVVDRIPPPADTIDKPTKALIFDSYYDSYRGVIVYFRVISGRISTKDKVLLMASKKSYELDEIGVMSPDQCEVNELHAGEVGYLAASIKAVADARVGDTITLLNAPADEPLPGYTEAKPMVFCGLFPTDSDQYPDLREALDKLQLSDAALKYEPETSSAMGFGFRCGFLGLLHMEIVQERLEREYDLDLIVTAPSVIYKVNMIDGQMLMVDNPATLPDPQRRESIEEPYVRMEIYAPNEYNGTLMGLCQERRGEYIDMKYITTERVTLIYELPLAEVVTDFFDQMKSRTKGYASMEYHLIGYRRNDLVRLDVLINAEKADPLTTIAHRDKAYSIGKGLVEKLKELIPRQQFKIPLQASIGSRIIASESISAMRKDVLAKCYGGDISRKKKLLKKQAKGKKRMKAMGKVDVPQEAFMAVLKLNQTS</sequence>
<gene>
    <name evidence="1" type="primary">lepA</name>
    <name type="ordered locus">PMT_0257</name>
</gene>
<dbReference type="EC" id="3.6.5.n1" evidence="1"/>
<dbReference type="EMBL" id="BX548175">
    <property type="protein sequence ID" value="CAE20432.1"/>
    <property type="molecule type" value="Genomic_DNA"/>
</dbReference>
<dbReference type="RefSeq" id="WP_011129636.1">
    <property type="nucleotide sequence ID" value="NC_005071.1"/>
</dbReference>
<dbReference type="SMR" id="Q7V8S4"/>
<dbReference type="KEGG" id="pmt:PMT_0257"/>
<dbReference type="eggNOG" id="COG0481">
    <property type="taxonomic scope" value="Bacteria"/>
</dbReference>
<dbReference type="HOGENOM" id="CLU_009995_3_3_3"/>
<dbReference type="OrthoDB" id="580826at2"/>
<dbReference type="Proteomes" id="UP000001423">
    <property type="component" value="Chromosome"/>
</dbReference>
<dbReference type="GO" id="GO:0005886">
    <property type="term" value="C:plasma membrane"/>
    <property type="evidence" value="ECO:0007669"/>
    <property type="project" value="UniProtKB-SubCell"/>
</dbReference>
<dbReference type="GO" id="GO:0005525">
    <property type="term" value="F:GTP binding"/>
    <property type="evidence" value="ECO:0007669"/>
    <property type="project" value="UniProtKB-KW"/>
</dbReference>
<dbReference type="GO" id="GO:0003924">
    <property type="term" value="F:GTPase activity"/>
    <property type="evidence" value="ECO:0007669"/>
    <property type="project" value="InterPro"/>
</dbReference>
<dbReference type="GO" id="GO:0043022">
    <property type="term" value="F:ribosome binding"/>
    <property type="evidence" value="ECO:0007669"/>
    <property type="project" value="TreeGrafter"/>
</dbReference>
<dbReference type="GO" id="GO:0045727">
    <property type="term" value="P:positive regulation of translation"/>
    <property type="evidence" value="ECO:0007669"/>
    <property type="project" value="TreeGrafter"/>
</dbReference>
<dbReference type="GO" id="GO:0006412">
    <property type="term" value="P:translation"/>
    <property type="evidence" value="ECO:0007669"/>
    <property type="project" value="UniProtKB-KW"/>
</dbReference>
<dbReference type="CDD" id="cd03699">
    <property type="entry name" value="EF4_II"/>
    <property type="match status" value="1"/>
</dbReference>
<dbReference type="CDD" id="cd16260">
    <property type="entry name" value="EF4_III"/>
    <property type="match status" value="1"/>
</dbReference>
<dbReference type="CDD" id="cd01890">
    <property type="entry name" value="LepA"/>
    <property type="match status" value="1"/>
</dbReference>
<dbReference type="CDD" id="cd03709">
    <property type="entry name" value="lepA_C"/>
    <property type="match status" value="1"/>
</dbReference>
<dbReference type="FunFam" id="3.40.50.300:FF:000078">
    <property type="entry name" value="Elongation factor 4"/>
    <property type="match status" value="1"/>
</dbReference>
<dbReference type="FunFam" id="2.40.30.10:FF:000015">
    <property type="entry name" value="Translation factor GUF1, mitochondrial"/>
    <property type="match status" value="1"/>
</dbReference>
<dbReference type="FunFam" id="3.30.70.240:FF:000007">
    <property type="entry name" value="Translation factor GUF1, mitochondrial"/>
    <property type="match status" value="1"/>
</dbReference>
<dbReference type="FunFam" id="3.30.70.2570:FF:000001">
    <property type="entry name" value="Translation factor GUF1, mitochondrial"/>
    <property type="match status" value="1"/>
</dbReference>
<dbReference type="FunFam" id="3.30.70.870:FF:000004">
    <property type="entry name" value="Translation factor GUF1, mitochondrial"/>
    <property type="match status" value="1"/>
</dbReference>
<dbReference type="Gene3D" id="3.30.70.240">
    <property type="match status" value="1"/>
</dbReference>
<dbReference type="Gene3D" id="3.30.70.2570">
    <property type="entry name" value="Elongation factor 4, C-terminal domain"/>
    <property type="match status" value="1"/>
</dbReference>
<dbReference type="Gene3D" id="3.30.70.870">
    <property type="entry name" value="Elongation Factor G (Translational Gtpase), domain 3"/>
    <property type="match status" value="1"/>
</dbReference>
<dbReference type="Gene3D" id="3.40.50.300">
    <property type="entry name" value="P-loop containing nucleotide triphosphate hydrolases"/>
    <property type="match status" value="1"/>
</dbReference>
<dbReference type="Gene3D" id="2.40.30.10">
    <property type="entry name" value="Translation factors"/>
    <property type="match status" value="1"/>
</dbReference>
<dbReference type="HAMAP" id="MF_03138">
    <property type="entry name" value="GUFP"/>
    <property type="match status" value="1"/>
</dbReference>
<dbReference type="HAMAP" id="MF_00071">
    <property type="entry name" value="LepA"/>
    <property type="match status" value="1"/>
</dbReference>
<dbReference type="InterPro" id="IPR006297">
    <property type="entry name" value="EF-4"/>
</dbReference>
<dbReference type="InterPro" id="IPR035647">
    <property type="entry name" value="EFG_III/V"/>
</dbReference>
<dbReference type="InterPro" id="IPR000640">
    <property type="entry name" value="EFG_V-like"/>
</dbReference>
<dbReference type="InterPro" id="IPR004161">
    <property type="entry name" value="EFTu-like_2"/>
</dbReference>
<dbReference type="InterPro" id="IPR031157">
    <property type="entry name" value="G_TR_CS"/>
</dbReference>
<dbReference type="InterPro" id="IPR027518">
    <property type="entry name" value="GUFP"/>
</dbReference>
<dbReference type="InterPro" id="IPR038363">
    <property type="entry name" value="LepA_C_sf"/>
</dbReference>
<dbReference type="InterPro" id="IPR013842">
    <property type="entry name" value="LepA_CTD"/>
</dbReference>
<dbReference type="InterPro" id="IPR035654">
    <property type="entry name" value="LepA_IV"/>
</dbReference>
<dbReference type="InterPro" id="IPR027417">
    <property type="entry name" value="P-loop_NTPase"/>
</dbReference>
<dbReference type="InterPro" id="IPR005225">
    <property type="entry name" value="Small_GTP-bd"/>
</dbReference>
<dbReference type="InterPro" id="IPR000795">
    <property type="entry name" value="T_Tr_GTP-bd_dom"/>
</dbReference>
<dbReference type="InterPro" id="IPR009000">
    <property type="entry name" value="Transl_B-barrel_sf"/>
</dbReference>
<dbReference type="NCBIfam" id="TIGR01393">
    <property type="entry name" value="lepA"/>
    <property type="match status" value="1"/>
</dbReference>
<dbReference type="NCBIfam" id="TIGR00231">
    <property type="entry name" value="small_GTP"/>
    <property type="match status" value="1"/>
</dbReference>
<dbReference type="PANTHER" id="PTHR43512:SF4">
    <property type="entry name" value="TRANSLATION FACTOR GUF1 HOMOLOG, CHLOROPLASTIC"/>
    <property type="match status" value="1"/>
</dbReference>
<dbReference type="PANTHER" id="PTHR43512">
    <property type="entry name" value="TRANSLATION FACTOR GUF1-RELATED"/>
    <property type="match status" value="1"/>
</dbReference>
<dbReference type="Pfam" id="PF00679">
    <property type="entry name" value="EFG_C"/>
    <property type="match status" value="1"/>
</dbReference>
<dbReference type="Pfam" id="PF00009">
    <property type="entry name" value="GTP_EFTU"/>
    <property type="match status" value="1"/>
</dbReference>
<dbReference type="Pfam" id="PF03144">
    <property type="entry name" value="GTP_EFTU_D2"/>
    <property type="match status" value="1"/>
</dbReference>
<dbReference type="Pfam" id="PF06421">
    <property type="entry name" value="LepA_C"/>
    <property type="match status" value="1"/>
</dbReference>
<dbReference type="PRINTS" id="PR00315">
    <property type="entry name" value="ELONGATNFCT"/>
</dbReference>
<dbReference type="SUPFAM" id="SSF54980">
    <property type="entry name" value="EF-G C-terminal domain-like"/>
    <property type="match status" value="2"/>
</dbReference>
<dbReference type="SUPFAM" id="SSF52540">
    <property type="entry name" value="P-loop containing nucleoside triphosphate hydrolases"/>
    <property type="match status" value="1"/>
</dbReference>
<dbReference type="SUPFAM" id="SSF50447">
    <property type="entry name" value="Translation proteins"/>
    <property type="match status" value="1"/>
</dbReference>
<dbReference type="PROSITE" id="PS00301">
    <property type="entry name" value="G_TR_1"/>
    <property type="match status" value="1"/>
</dbReference>
<dbReference type="PROSITE" id="PS51722">
    <property type="entry name" value="G_TR_2"/>
    <property type="match status" value="1"/>
</dbReference>
<reference key="1">
    <citation type="journal article" date="2003" name="Nature">
        <title>Genome divergence in two Prochlorococcus ecotypes reflects oceanic niche differentiation.</title>
        <authorList>
            <person name="Rocap G."/>
            <person name="Larimer F.W."/>
            <person name="Lamerdin J.E."/>
            <person name="Malfatti S."/>
            <person name="Chain P."/>
            <person name="Ahlgren N.A."/>
            <person name="Arellano A."/>
            <person name="Coleman M."/>
            <person name="Hauser L."/>
            <person name="Hess W.R."/>
            <person name="Johnson Z.I."/>
            <person name="Land M.L."/>
            <person name="Lindell D."/>
            <person name="Post A.F."/>
            <person name="Regala W."/>
            <person name="Shah M."/>
            <person name="Shaw S.L."/>
            <person name="Steglich C."/>
            <person name="Sullivan M.B."/>
            <person name="Ting C.S."/>
            <person name="Tolonen A."/>
            <person name="Webb E.A."/>
            <person name="Zinser E.R."/>
            <person name="Chisholm S.W."/>
        </authorList>
    </citation>
    <scope>NUCLEOTIDE SEQUENCE [LARGE SCALE GENOMIC DNA]</scope>
    <source>
        <strain>MIT 9313</strain>
    </source>
</reference>
<accession>Q7V8S4</accession>
<feature type="chain" id="PRO_0000176321" description="Elongation factor 4">
    <location>
        <begin position="1"/>
        <end position="604"/>
    </location>
</feature>
<feature type="domain" description="tr-type G">
    <location>
        <begin position="7"/>
        <end position="189"/>
    </location>
</feature>
<feature type="binding site" evidence="1">
    <location>
        <begin position="19"/>
        <end position="24"/>
    </location>
    <ligand>
        <name>GTP</name>
        <dbReference type="ChEBI" id="CHEBI:37565"/>
    </ligand>
</feature>
<feature type="binding site" evidence="1">
    <location>
        <begin position="136"/>
        <end position="139"/>
    </location>
    <ligand>
        <name>GTP</name>
        <dbReference type="ChEBI" id="CHEBI:37565"/>
    </ligand>
</feature>
<keyword id="KW-0997">Cell inner membrane</keyword>
<keyword id="KW-1003">Cell membrane</keyword>
<keyword id="KW-0342">GTP-binding</keyword>
<keyword id="KW-0378">Hydrolase</keyword>
<keyword id="KW-0472">Membrane</keyword>
<keyword id="KW-0547">Nucleotide-binding</keyword>
<keyword id="KW-0648">Protein biosynthesis</keyword>
<keyword id="KW-1185">Reference proteome</keyword>
<proteinExistence type="inferred from homology"/>
<organism>
    <name type="scientific">Prochlorococcus marinus (strain MIT 9313)</name>
    <dbReference type="NCBI Taxonomy" id="74547"/>
    <lineage>
        <taxon>Bacteria</taxon>
        <taxon>Bacillati</taxon>
        <taxon>Cyanobacteriota</taxon>
        <taxon>Cyanophyceae</taxon>
        <taxon>Synechococcales</taxon>
        <taxon>Prochlorococcaceae</taxon>
        <taxon>Prochlorococcus</taxon>
    </lineage>
</organism>
<name>LEPA_PROMM</name>
<evidence type="ECO:0000255" key="1">
    <source>
        <dbReference type="HAMAP-Rule" id="MF_00071"/>
    </source>
</evidence>
<protein>
    <recommendedName>
        <fullName evidence="1">Elongation factor 4</fullName>
        <shortName evidence="1">EF-4</shortName>
        <ecNumber evidence="1">3.6.5.n1</ecNumber>
    </recommendedName>
    <alternativeName>
        <fullName evidence="1">Ribosomal back-translocase LepA</fullName>
    </alternativeName>
</protein>
<comment type="function">
    <text evidence="1">Required for accurate and efficient protein synthesis under certain stress conditions. May act as a fidelity factor of the translation reaction, by catalyzing a one-codon backward translocation of tRNAs on improperly translocated ribosomes. Back-translocation proceeds from a post-translocation (POST) complex to a pre-translocation (PRE) complex, thus giving elongation factor G a second chance to translocate the tRNAs correctly. Binds to ribosomes in a GTP-dependent manner.</text>
</comment>
<comment type="catalytic activity">
    <reaction evidence="1">
        <text>GTP + H2O = GDP + phosphate + H(+)</text>
        <dbReference type="Rhea" id="RHEA:19669"/>
        <dbReference type="ChEBI" id="CHEBI:15377"/>
        <dbReference type="ChEBI" id="CHEBI:15378"/>
        <dbReference type="ChEBI" id="CHEBI:37565"/>
        <dbReference type="ChEBI" id="CHEBI:43474"/>
        <dbReference type="ChEBI" id="CHEBI:58189"/>
        <dbReference type="EC" id="3.6.5.n1"/>
    </reaction>
</comment>
<comment type="subcellular location">
    <subcellularLocation>
        <location evidence="1">Cell inner membrane</location>
        <topology evidence="1">Peripheral membrane protein</topology>
        <orientation evidence="1">Cytoplasmic side</orientation>
    </subcellularLocation>
</comment>
<comment type="similarity">
    <text evidence="1">Belongs to the TRAFAC class translation factor GTPase superfamily. Classic translation factor GTPase family. LepA subfamily.</text>
</comment>